<comment type="function">
    <text>Involved in oxygen transport from the lung to the various peripheral tissues.</text>
</comment>
<comment type="subunit">
    <text>Heterotetramer of two alpha chains and two beta chains.</text>
</comment>
<comment type="tissue specificity">
    <text>Red blood cells.</text>
</comment>
<comment type="similarity">
    <text evidence="1">Belongs to the globin family.</text>
</comment>
<sequence length="141" mass="15446">VLSGTDKTNVKGIFSKISSHAEEYGAETLERMFITYPQTKTYFPHFDLHHGSAQIKAHGKKVANALIEAVNHIDDISGALSKLSDLHAQKLRVDPVNFKLLGQCFLVVVAIHHPSALTPEVHASLDKFLCAVGAVLTAKYR</sequence>
<keyword id="KW-0002">3D-structure</keyword>
<keyword id="KW-0903">Direct protein sequencing</keyword>
<keyword id="KW-0349">Heme</keyword>
<keyword id="KW-0408">Iron</keyword>
<keyword id="KW-0479">Metal-binding</keyword>
<keyword id="KW-0561">Oxygen transport</keyword>
<keyword id="KW-0813">Transport</keyword>
<dbReference type="PIR" id="A91712">
    <property type="entry name" value="HAOS"/>
</dbReference>
<dbReference type="PDB" id="3A59">
    <property type="method" value="X-ray"/>
    <property type="resolution" value="3.41 A"/>
    <property type="chains" value="A/C/E/G=1-141"/>
</dbReference>
<dbReference type="PDB" id="3FS4">
    <property type="method" value="X-ray"/>
    <property type="resolution" value="2.22 A"/>
    <property type="chains" value="A/C=1-141"/>
</dbReference>
<dbReference type="PDBsum" id="3A59"/>
<dbReference type="PDBsum" id="3FS4"/>
<dbReference type="SMR" id="P01981"/>
<dbReference type="EvolutionaryTrace" id="P01981"/>
<dbReference type="GO" id="GO:0072562">
    <property type="term" value="C:blood microparticle"/>
    <property type="evidence" value="ECO:0007669"/>
    <property type="project" value="TreeGrafter"/>
</dbReference>
<dbReference type="GO" id="GO:0031838">
    <property type="term" value="C:haptoglobin-hemoglobin complex"/>
    <property type="evidence" value="ECO:0007669"/>
    <property type="project" value="TreeGrafter"/>
</dbReference>
<dbReference type="GO" id="GO:0005833">
    <property type="term" value="C:hemoglobin complex"/>
    <property type="evidence" value="ECO:0007669"/>
    <property type="project" value="InterPro"/>
</dbReference>
<dbReference type="GO" id="GO:0031720">
    <property type="term" value="F:haptoglobin binding"/>
    <property type="evidence" value="ECO:0007669"/>
    <property type="project" value="TreeGrafter"/>
</dbReference>
<dbReference type="GO" id="GO:0020037">
    <property type="term" value="F:heme binding"/>
    <property type="evidence" value="ECO:0007669"/>
    <property type="project" value="InterPro"/>
</dbReference>
<dbReference type="GO" id="GO:0005506">
    <property type="term" value="F:iron ion binding"/>
    <property type="evidence" value="ECO:0007669"/>
    <property type="project" value="InterPro"/>
</dbReference>
<dbReference type="GO" id="GO:0043177">
    <property type="term" value="F:organic acid binding"/>
    <property type="evidence" value="ECO:0007669"/>
    <property type="project" value="TreeGrafter"/>
</dbReference>
<dbReference type="GO" id="GO:0019825">
    <property type="term" value="F:oxygen binding"/>
    <property type="evidence" value="ECO:0007669"/>
    <property type="project" value="InterPro"/>
</dbReference>
<dbReference type="GO" id="GO:0005344">
    <property type="term" value="F:oxygen carrier activity"/>
    <property type="evidence" value="ECO:0007669"/>
    <property type="project" value="UniProtKB-KW"/>
</dbReference>
<dbReference type="GO" id="GO:0004601">
    <property type="term" value="F:peroxidase activity"/>
    <property type="evidence" value="ECO:0007669"/>
    <property type="project" value="TreeGrafter"/>
</dbReference>
<dbReference type="GO" id="GO:0042744">
    <property type="term" value="P:hydrogen peroxide catabolic process"/>
    <property type="evidence" value="ECO:0007669"/>
    <property type="project" value="TreeGrafter"/>
</dbReference>
<dbReference type="CDD" id="cd08927">
    <property type="entry name" value="Hb-alpha-like"/>
    <property type="match status" value="1"/>
</dbReference>
<dbReference type="FunFam" id="1.10.490.10:FF:000002">
    <property type="entry name" value="Hemoglobin subunit alpha"/>
    <property type="match status" value="1"/>
</dbReference>
<dbReference type="Gene3D" id="1.10.490.10">
    <property type="entry name" value="Globins"/>
    <property type="match status" value="1"/>
</dbReference>
<dbReference type="InterPro" id="IPR000971">
    <property type="entry name" value="Globin"/>
</dbReference>
<dbReference type="InterPro" id="IPR009050">
    <property type="entry name" value="Globin-like_sf"/>
</dbReference>
<dbReference type="InterPro" id="IPR012292">
    <property type="entry name" value="Globin/Proto"/>
</dbReference>
<dbReference type="InterPro" id="IPR002338">
    <property type="entry name" value="Hemoglobin_a-typ"/>
</dbReference>
<dbReference type="InterPro" id="IPR050056">
    <property type="entry name" value="Hemoglobin_oxygen_transport"/>
</dbReference>
<dbReference type="InterPro" id="IPR002339">
    <property type="entry name" value="Hemoglobin_pi"/>
</dbReference>
<dbReference type="PANTHER" id="PTHR11442">
    <property type="entry name" value="HEMOGLOBIN FAMILY MEMBER"/>
    <property type="match status" value="1"/>
</dbReference>
<dbReference type="PANTHER" id="PTHR11442:SF48">
    <property type="entry name" value="HEMOGLOBIN SUBUNIT ALPHA"/>
    <property type="match status" value="1"/>
</dbReference>
<dbReference type="Pfam" id="PF00042">
    <property type="entry name" value="Globin"/>
    <property type="match status" value="1"/>
</dbReference>
<dbReference type="PRINTS" id="PR00612">
    <property type="entry name" value="ALPHAHAEM"/>
</dbReference>
<dbReference type="PRINTS" id="PR00815">
    <property type="entry name" value="PIHAEM"/>
</dbReference>
<dbReference type="SUPFAM" id="SSF46458">
    <property type="entry name" value="Globin-like"/>
    <property type="match status" value="1"/>
</dbReference>
<dbReference type="PROSITE" id="PS01033">
    <property type="entry name" value="GLOBIN"/>
    <property type="match status" value="1"/>
</dbReference>
<reference key="1">
    <citation type="journal article" date="1983" name="Hoppe-Seyler's Z. Physiol. Chem.">
        <title>Primary structures of the alpha and beta chains from the major hemoglobin component of the ostrich (Struthio camelus) and American rhea (Rhea americana) (Struthioformes). Aspects of respiratory physiology and taxonomy.</title>
        <authorList>
            <person name="Oberthur W."/>
            <person name="Braunitzer G."/>
            <person name="Baumann R."/>
            <person name="Wright P.G."/>
        </authorList>
    </citation>
    <scope>PROTEIN SEQUENCE (MAJOR CHAIN)</scope>
</reference>
<reference key="2">
    <citation type="journal article" date="1980" name="Hoppe-Seyler's Z. Physiol. Chem.">
        <title>The sequence of the hemoglobin of barheaded goose (Anser indicus) and ostrich (Struthio camelus). Inositol pentaphosphate as a modulator of the evolution rate: the surprising sequence alpha 63 (E12) valine.</title>
        <authorList>
            <person name="Oberthur W."/>
            <person name="Voelter W."/>
            <person name="Braunitzer G."/>
        </authorList>
    </citation>
    <scope>PROTEIN SEQUENCE</scope>
</reference>
<protein>
    <recommendedName>
        <fullName>Hemoglobin subunit alpha-A</fullName>
    </recommendedName>
    <alternativeName>
        <fullName>Alpha-A-globin</fullName>
    </alternativeName>
    <alternativeName>
        <fullName>Hemoglobin alpha-A chain</fullName>
    </alternativeName>
</protein>
<evidence type="ECO:0000255" key="1">
    <source>
        <dbReference type="PROSITE-ProRule" id="PRU00238"/>
    </source>
</evidence>
<evidence type="ECO:0007829" key="2">
    <source>
        <dbReference type="PDB" id="3A59"/>
    </source>
</evidence>
<evidence type="ECO:0007829" key="3">
    <source>
        <dbReference type="PDB" id="3FS4"/>
    </source>
</evidence>
<gene>
    <name type="primary">HBAA</name>
</gene>
<feature type="chain" id="PRO_0000052769" description="Hemoglobin subunit alpha-A">
    <location>
        <begin position="1"/>
        <end position="141"/>
    </location>
</feature>
<feature type="domain" description="Globin" evidence="1">
    <location>
        <begin position="1"/>
        <end position="141"/>
    </location>
</feature>
<feature type="binding site" evidence="1">
    <location>
        <position position="58"/>
    </location>
    <ligand>
        <name>O2</name>
        <dbReference type="ChEBI" id="CHEBI:15379"/>
    </ligand>
</feature>
<feature type="binding site" description="proximal binding residue" evidence="1">
    <location>
        <position position="87"/>
    </location>
    <ligand>
        <name>heme b</name>
        <dbReference type="ChEBI" id="CHEBI:60344"/>
    </ligand>
    <ligandPart>
        <name>Fe</name>
        <dbReference type="ChEBI" id="CHEBI:18248"/>
    </ligandPart>
</feature>
<feature type="sequence variant">
    <original>V</original>
    <variation>A</variation>
    <location>
        <position position="109"/>
    </location>
</feature>
<feature type="helix" evidence="3">
    <location>
        <begin position="4"/>
        <end position="17"/>
    </location>
</feature>
<feature type="helix" evidence="3">
    <location>
        <begin position="21"/>
        <end position="35"/>
    </location>
</feature>
<feature type="helix" evidence="3">
    <location>
        <begin position="37"/>
        <end position="42"/>
    </location>
</feature>
<feature type="strand" evidence="2">
    <location>
        <begin position="44"/>
        <end position="46"/>
    </location>
</feature>
<feature type="strand" evidence="2">
    <location>
        <begin position="49"/>
        <end position="51"/>
    </location>
</feature>
<feature type="helix" evidence="3">
    <location>
        <begin position="53"/>
        <end position="71"/>
    </location>
</feature>
<feature type="turn" evidence="3">
    <location>
        <begin position="72"/>
        <end position="74"/>
    </location>
</feature>
<feature type="helix" evidence="3">
    <location>
        <begin position="76"/>
        <end position="80"/>
    </location>
</feature>
<feature type="helix" evidence="3">
    <location>
        <begin position="82"/>
        <end position="87"/>
    </location>
</feature>
<feature type="turn" evidence="3">
    <location>
        <begin position="88"/>
        <end position="90"/>
    </location>
</feature>
<feature type="helix" evidence="3">
    <location>
        <begin position="96"/>
        <end position="112"/>
    </location>
</feature>
<feature type="turn" evidence="3">
    <location>
        <begin position="114"/>
        <end position="116"/>
    </location>
</feature>
<feature type="helix" evidence="3">
    <location>
        <begin position="119"/>
        <end position="136"/>
    </location>
</feature>
<feature type="helix" evidence="3">
    <location>
        <begin position="138"/>
        <end position="140"/>
    </location>
</feature>
<accession>P01981</accession>
<proteinExistence type="evidence at protein level"/>
<name>HBA_STRCA</name>
<organism>
    <name type="scientific">Struthio camelus</name>
    <name type="common">Common ostrich</name>
    <dbReference type="NCBI Taxonomy" id="8801"/>
    <lineage>
        <taxon>Eukaryota</taxon>
        <taxon>Metazoa</taxon>
        <taxon>Chordata</taxon>
        <taxon>Craniata</taxon>
        <taxon>Vertebrata</taxon>
        <taxon>Euteleostomi</taxon>
        <taxon>Archelosauria</taxon>
        <taxon>Archosauria</taxon>
        <taxon>Dinosauria</taxon>
        <taxon>Saurischia</taxon>
        <taxon>Theropoda</taxon>
        <taxon>Coelurosauria</taxon>
        <taxon>Aves</taxon>
        <taxon>Palaeognathae</taxon>
        <taxon>Struthioniformes</taxon>
        <taxon>Struthionidae</taxon>
        <taxon>Struthio</taxon>
    </lineage>
</organism>